<sequence length="700" mass="77474">MESRLPKPSGLKKPQMPIKTVLPTDRIRAGLGGGAAGAGAFNVNANQTYCGNLLPPLSRDLNNLPQVLERRGGGARAASPEPMKLGHRAKLRRSRSACDINELRGNKRTAAAPSLPSIPSKVSRLGGALTVSSQRLVRPAAPSSITATAVKRPPVTRPAPRAAGGAAAKKPAGTGAAASSGAAAAAPKRIAPYDFKARFHDLLEKHKVLKTKYEKQTEDMGELESMPQQLEETQNKLIETESSLKNTQSDNECLQRQVKQHTAKIETITSTLGRTKEELSELQAIHEKVKTEHAALSTEVVHLRQRTEELLRCNEQQAAELETCKEQLFQSNMERKELHNTVMDLRGNIRVFCRIRPPLESEENRMCCTWTYHDESTVELQSIDAQAKSKMGQQIFSFDQVFHPLSSQSDIFEMVSPLIQSALDGYNICIFAYGQTGSGKTYTMDGVPESVGVIPRTVDLLFDSIRGYRNLGWEYEIKATFLEIYNEVLYDLLSNEQKDMEIRMAKNNKNDIYVSNITEETVLDPNHLRHLMHTAKMNRATASTAGNERSSRSHAVTKLELIGRHAEKQEISVGSINLVDLAGSESPKTSTRMTETKNINRSLSELTNVILALLQKQDHIPYRNSKLTHLLMPSLGGNSKTLMFINVSPFQDCFQESVKSLRFAASVNSCKMTKAKRNRYLNNSVANSSTQSNNSGSFDK</sequence>
<feature type="chain" id="PRO_0000125378" description="Protein claret segregational">
    <location>
        <begin position="1"/>
        <end position="700"/>
    </location>
</feature>
<feature type="domain" description="Kinesin motor" evidence="2">
    <location>
        <begin position="348"/>
        <end position="670"/>
    </location>
</feature>
<feature type="region of interest" description="Disordered" evidence="3">
    <location>
        <begin position="141"/>
        <end position="185"/>
    </location>
</feature>
<feature type="region of interest" description="Required for minus-end directionality" evidence="8">
    <location>
        <begin position="664"/>
        <end position="668"/>
    </location>
</feature>
<feature type="region of interest" description="Disordered" evidence="3">
    <location>
        <begin position="681"/>
        <end position="700"/>
    </location>
</feature>
<feature type="coiled-coil region" evidence="1">
    <location>
        <begin position="196"/>
        <end position="346"/>
    </location>
</feature>
<feature type="compositionally biased region" description="Low complexity" evidence="3">
    <location>
        <begin position="149"/>
        <end position="185"/>
    </location>
</feature>
<feature type="binding site" evidence="2">
    <location>
        <begin position="434"/>
        <end position="441"/>
    </location>
    <ligand>
        <name>ATP</name>
        <dbReference type="ChEBI" id="CHEBI:30616"/>
    </ligand>
</feature>
<feature type="modified residue" description="Phosphoserine" evidence="6">
    <location>
        <position position="94"/>
    </location>
</feature>
<feature type="modified residue" description="Phosphoserine" evidence="6">
    <location>
        <position position="96"/>
    </location>
</feature>
<feature type="mutagenesis site" description="In ncd(D); reduces motor velocity and shows abnormal chromosomal segregation." evidence="5 10">
    <original>V</original>
    <variation>F</variation>
    <location>
        <position position="556"/>
    </location>
</feature>
<feature type="sequence conflict" description="In Ref. 1; CAA36998." evidence="12" ref="1">
    <original>S</original>
    <variation>N</variation>
    <location>
        <position position="697"/>
    </location>
</feature>
<feature type="helix" evidence="22">
    <location>
        <begin position="293"/>
        <end position="345"/>
    </location>
</feature>
<feature type="strand" evidence="22">
    <location>
        <begin position="348"/>
        <end position="355"/>
    </location>
</feature>
<feature type="helix" evidence="22">
    <location>
        <begin position="360"/>
        <end position="362"/>
    </location>
</feature>
<feature type="strand" evidence="21">
    <location>
        <begin position="363"/>
        <end position="365"/>
    </location>
</feature>
<feature type="strand" evidence="22">
    <location>
        <begin position="369"/>
        <end position="374"/>
    </location>
</feature>
<feature type="strand" evidence="22">
    <location>
        <begin position="377"/>
        <end position="381"/>
    </location>
</feature>
<feature type="helix" evidence="20">
    <location>
        <begin position="385"/>
        <end position="388"/>
    </location>
</feature>
<feature type="helix" evidence="22">
    <location>
        <begin position="389"/>
        <end position="391"/>
    </location>
</feature>
<feature type="strand" evidence="22">
    <location>
        <begin position="395"/>
        <end position="397"/>
    </location>
</feature>
<feature type="strand" evidence="22">
    <location>
        <begin position="399"/>
        <end position="402"/>
    </location>
</feature>
<feature type="helix" evidence="22">
    <location>
        <begin position="408"/>
        <end position="412"/>
    </location>
</feature>
<feature type="turn" evidence="22">
    <location>
        <begin position="413"/>
        <end position="415"/>
    </location>
</feature>
<feature type="helix" evidence="22">
    <location>
        <begin position="416"/>
        <end position="423"/>
    </location>
</feature>
<feature type="strand" evidence="22">
    <location>
        <begin position="428"/>
        <end position="435"/>
    </location>
</feature>
<feature type="helix" evidence="22">
    <location>
        <begin position="440"/>
        <end position="444"/>
    </location>
</feature>
<feature type="strand" evidence="18">
    <location>
        <begin position="448"/>
        <end position="451"/>
    </location>
</feature>
<feature type="helix" evidence="22">
    <location>
        <begin position="453"/>
        <end position="468"/>
    </location>
</feature>
<feature type="helix" evidence="22">
    <location>
        <begin position="469"/>
        <end position="471"/>
    </location>
</feature>
<feature type="strand" evidence="22">
    <location>
        <begin position="473"/>
        <end position="485"/>
    </location>
</feature>
<feature type="strand" evidence="22">
    <location>
        <begin position="488"/>
        <end position="491"/>
    </location>
</feature>
<feature type="strand" evidence="22">
    <location>
        <begin position="502"/>
        <end position="504"/>
    </location>
</feature>
<feature type="strand" evidence="22">
    <location>
        <begin position="511"/>
        <end position="514"/>
    </location>
</feature>
<feature type="strand" evidence="20">
    <location>
        <begin position="520"/>
        <end position="522"/>
    </location>
</feature>
<feature type="helix" evidence="22">
    <location>
        <begin position="525"/>
        <end position="538"/>
    </location>
</feature>
<feature type="strand" evidence="20">
    <location>
        <begin position="543"/>
        <end position="545"/>
    </location>
</feature>
<feature type="helix" evidence="22">
    <location>
        <begin position="547"/>
        <end position="550"/>
    </location>
</feature>
<feature type="strand" evidence="22">
    <location>
        <begin position="554"/>
        <end position="565"/>
    </location>
</feature>
<feature type="turn" evidence="22">
    <location>
        <begin position="566"/>
        <end position="569"/>
    </location>
</feature>
<feature type="strand" evidence="22">
    <location>
        <begin position="570"/>
        <end position="580"/>
    </location>
</feature>
<feature type="turn" evidence="22">
    <location>
        <begin position="598"/>
        <end position="600"/>
    </location>
</feature>
<feature type="helix" evidence="22">
    <location>
        <begin position="601"/>
        <end position="614"/>
    </location>
</feature>
<feature type="helix" evidence="22">
    <location>
        <begin position="622"/>
        <end position="624"/>
    </location>
</feature>
<feature type="helix" evidence="22">
    <location>
        <begin position="626"/>
        <end position="631"/>
    </location>
</feature>
<feature type="helix" evidence="22">
    <location>
        <begin position="632"/>
        <end position="634"/>
    </location>
</feature>
<feature type="strand" evidence="19">
    <location>
        <begin position="635"/>
        <end position="638"/>
    </location>
</feature>
<feature type="strand" evidence="22">
    <location>
        <begin position="640"/>
        <end position="647"/>
    </location>
</feature>
<feature type="helix" evidence="22">
    <location>
        <begin position="651"/>
        <end position="653"/>
    </location>
</feature>
<feature type="helix" evidence="22">
    <location>
        <begin position="654"/>
        <end position="670"/>
    </location>
</feature>
<evidence type="ECO:0000255" key="1"/>
<evidence type="ECO:0000255" key="2">
    <source>
        <dbReference type="PROSITE-ProRule" id="PRU00283"/>
    </source>
</evidence>
<evidence type="ECO:0000256" key="3">
    <source>
        <dbReference type="SAM" id="MobiDB-lite"/>
    </source>
</evidence>
<evidence type="ECO:0000269" key="4">
    <source>
    </source>
</evidence>
<evidence type="ECO:0000269" key="5">
    <source>
    </source>
</evidence>
<evidence type="ECO:0000269" key="6">
    <source>
    </source>
</evidence>
<evidence type="ECO:0000269" key="7">
    <source>
    </source>
</evidence>
<evidence type="ECO:0000269" key="8">
    <source>
    </source>
</evidence>
<evidence type="ECO:0000269" key="9">
    <source>
    </source>
</evidence>
<evidence type="ECO:0000269" key="10">
    <source>
    </source>
</evidence>
<evidence type="ECO:0000303" key="11">
    <source>
    </source>
</evidence>
<evidence type="ECO:0000305" key="12"/>
<evidence type="ECO:0007744" key="13">
    <source>
        <dbReference type="PDB" id="5HLE"/>
    </source>
</evidence>
<evidence type="ECO:0007744" key="14">
    <source>
        <dbReference type="PDB" id="5HNW"/>
    </source>
</evidence>
<evidence type="ECO:0007744" key="15">
    <source>
        <dbReference type="PDB" id="5HNX"/>
    </source>
</evidence>
<evidence type="ECO:0007744" key="16">
    <source>
        <dbReference type="PDB" id="5HNY"/>
    </source>
</evidence>
<evidence type="ECO:0007744" key="17">
    <source>
        <dbReference type="PDB" id="5HNZ"/>
    </source>
</evidence>
<evidence type="ECO:0007829" key="18">
    <source>
        <dbReference type="PDB" id="1CZ7"/>
    </source>
</evidence>
<evidence type="ECO:0007829" key="19">
    <source>
        <dbReference type="PDB" id="1N6M"/>
    </source>
</evidence>
<evidence type="ECO:0007829" key="20">
    <source>
        <dbReference type="PDB" id="2NCD"/>
    </source>
</evidence>
<evidence type="ECO:0007829" key="21">
    <source>
        <dbReference type="PDB" id="3L1C"/>
    </source>
</evidence>
<evidence type="ECO:0007829" key="22">
    <source>
        <dbReference type="PDB" id="3U06"/>
    </source>
</evidence>
<comment type="function">
    <text evidence="4 7 8 9">Minus-end-directed microtubule-based motor protein (PubMed:2146510, PubMed:27452403, PubMed:8112290). Has ATPase activity (PubMed:27452403). Required for normal chromosomal segregation in meiosis in females, and in early mitotic divisions of the embryo (PubMed:1691829).</text>
</comment>
<comment type="catalytic activity">
    <reaction evidence="8">
        <text>ATP + H2O = ADP + phosphate + H(+)</text>
        <dbReference type="Rhea" id="RHEA:13065"/>
        <dbReference type="ChEBI" id="CHEBI:15377"/>
        <dbReference type="ChEBI" id="CHEBI:15378"/>
        <dbReference type="ChEBI" id="CHEBI:30616"/>
        <dbReference type="ChEBI" id="CHEBI:43474"/>
        <dbReference type="ChEBI" id="CHEBI:456216"/>
    </reaction>
</comment>
<comment type="biophysicochemical properties">
    <kinetics>
        <text evidence="8">kcat is 2.2 sec(-1) for ATPase activity.</text>
    </kinetics>
</comment>
<comment type="subcellular location">
    <subcellularLocation>
        <location evidence="12">Cytoplasm</location>
        <location evidence="12">Cytoskeleton</location>
    </subcellularLocation>
</comment>
<comment type="similarity">
    <text evidence="2">Belongs to the TRAFAC class myosin-kinesin ATPase superfamily. Kinesin family. NCD subfamily.</text>
</comment>
<gene>
    <name type="primary">ncd</name>
    <name type="synonym">CA(ND)</name>
    <name type="ORF">CG7831</name>
</gene>
<accession>P20480</accession>
<accession>Q9VAG8</accession>
<proteinExistence type="evidence at protein level"/>
<name>NCD_DROME</name>
<keyword id="KW-0002">3D-structure</keyword>
<keyword id="KW-0067">ATP-binding</keyword>
<keyword id="KW-0131">Cell cycle</keyword>
<keyword id="KW-0132">Cell division</keyword>
<keyword id="KW-0175">Coiled coil</keyword>
<keyword id="KW-0963">Cytoplasm</keyword>
<keyword id="KW-0206">Cytoskeleton</keyword>
<keyword id="KW-0378">Hydrolase</keyword>
<keyword id="KW-0469">Meiosis</keyword>
<keyword id="KW-0493">Microtubule</keyword>
<keyword id="KW-0498">Mitosis</keyword>
<keyword id="KW-0505">Motor protein</keyword>
<keyword id="KW-0547">Nucleotide-binding</keyword>
<keyword id="KW-0597">Phosphoprotein</keyword>
<keyword id="KW-1185">Reference proteome</keyword>
<protein>
    <recommendedName>
        <fullName>Protein claret segregational</fullName>
        <ecNumber evidence="8">3.6.4.-</ecNumber>
    </recommendedName>
    <alternativeName>
        <fullName evidence="11">Kinesin-14</fullName>
    </alternativeName>
</protein>
<reference key="1">
    <citation type="journal article" date="1990" name="Nature">
        <title>Mediation of meiotic and early mitotic chromosome segregation in Drosophila by a protein related to kinesin.</title>
        <authorList>
            <person name="Endow S.A."/>
            <person name="Henikoff S."/>
            <person name="Soler-Niedziela L."/>
        </authorList>
    </citation>
    <scope>NUCLEOTIDE SEQUENCE [GENOMIC DNA]</scope>
    <source>
        <strain>Canton-S</strain>
        <strain>Oregon-R</strain>
        <tissue>Ovary</tissue>
    </source>
</reference>
<reference key="2">
    <citation type="journal article" date="2000" name="Science">
        <title>The genome sequence of Drosophila melanogaster.</title>
        <authorList>
            <person name="Adams M.D."/>
            <person name="Celniker S.E."/>
            <person name="Holt R.A."/>
            <person name="Evans C.A."/>
            <person name="Gocayne J.D."/>
            <person name="Amanatides P.G."/>
            <person name="Scherer S.E."/>
            <person name="Li P.W."/>
            <person name="Hoskins R.A."/>
            <person name="Galle R.F."/>
            <person name="George R.A."/>
            <person name="Lewis S.E."/>
            <person name="Richards S."/>
            <person name="Ashburner M."/>
            <person name="Henderson S.N."/>
            <person name="Sutton G.G."/>
            <person name="Wortman J.R."/>
            <person name="Yandell M.D."/>
            <person name="Zhang Q."/>
            <person name="Chen L.X."/>
            <person name="Brandon R.C."/>
            <person name="Rogers Y.-H.C."/>
            <person name="Blazej R.G."/>
            <person name="Champe M."/>
            <person name="Pfeiffer B.D."/>
            <person name="Wan K.H."/>
            <person name="Doyle C."/>
            <person name="Baxter E.G."/>
            <person name="Helt G."/>
            <person name="Nelson C.R."/>
            <person name="Miklos G.L.G."/>
            <person name="Abril J.F."/>
            <person name="Agbayani A."/>
            <person name="An H.-J."/>
            <person name="Andrews-Pfannkoch C."/>
            <person name="Baldwin D."/>
            <person name="Ballew R.M."/>
            <person name="Basu A."/>
            <person name="Baxendale J."/>
            <person name="Bayraktaroglu L."/>
            <person name="Beasley E.M."/>
            <person name="Beeson K.Y."/>
            <person name="Benos P.V."/>
            <person name="Berman B.P."/>
            <person name="Bhandari D."/>
            <person name="Bolshakov S."/>
            <person name="Borkova D."/>
            <person name="Botchan M.R."/>
            <person name="Bouck J."/>
            <person name="Brokstein P."/>
            <person name="Brottier P."/>
            <person name="Burtis K.C."/>
            <person name="Busam D.A."/>
            <person name="Butler H."/>
            <person name="Cadieu E."/>
            <person name="Center A."/>
            <person name="Chandra I."/>
            <person name="Cherry J.M."/>
            <person name="Cawley S."/>
            <person name="Dahlke C."/>
            <person name="Davenport L.B."/>
            <person name="Davies P."/>
            <person name="de Pablos B."/>
            <person name="Delcher A."/>
            <person name="Deng Z."/>
            <person name="Mays A.D."/>
            <person name="Dew I."/>
            <person name="Dietz S.M."/>
            <person name="Dodson K."/>
            <person name="Doup L.E."/>
            <person name="Downes M."/>
            <person name="Dugan-Rocha S."/>
            <person name="Dunkov B.C."/>
            <person name="Dunn P."/>
            <person name="Durbin K.J."/>
            <person name="Evangelista C.C."/>
            <person name="Ferraz C."/>
            <person name="Ferriera S."/>
            <person name="Fleischmann W."/>
            <person name="Fosler C."/>
            <person name="Gabrielian A.E."/>
            <person name="Garg N.S."/>
            <person name="Gelbart W.M."/>
            <person name="Glasser K."/>
            <person name="Glodek A."/>
            <person name="Gong F."/>
            <person name="Gorrell J.H."/>
            <person name="Gu Z."/>
            <person name="Guan P."/>
            <person name="Harris M."/>
            <person name="Harris N.L."/>
            <person name="Harvey D.A."/>
            <person name="Heiman T.J."/>
            <person name="Hernandez J.R."/>
            <person name="Houck J."/>
            <person name="Hostin D."/>
            <person name="Houston K.A."/>
            <person name="Howland T.J."/>
            <person name="Wei M.-H."/>
            <person name="Ibegwam C."/>
            <person name="Jalali M."/>
            <person name="Kalush F."/>
            <person name="Karpen G.H."/>
            <person name="Ke Z."/>
            <person name="Kennison J.A."/>
            <person name="Ketchum K.A."/>
            <person name="Kimmel B.E."/>
            <person name="Kodira C.D."/>
            <person name="Kraft C.L."/>
            <person name="Kravitz S."/>
            <person name="Kulp D."/>
            <person name="Lai Z."/>
            <person name="Lasko P."/>
            <person name="Lei Y."/>
            <person name="Levitsky A.A."/>
            <person name="Li J.H."/>
            <person name="Li Z."/>
            <person name="Liang Y."/>
            <person name="Lin X."/>
            <person name="Liu X."/>
            <person name="Mattei B."/>
            <person name="McIntosh T.C."/>
            <person name="McLeod M.P."/>
            <person name="McPherson D."/>
            <person name="Merkulov G."/>
            <person name="Milshina N.V."/>
            <person name="Mobarry C."/>
            <person name="Morris J."/>
            <person name="Moshrefi A."/>
            <person name="Mount S.M."/>
            <person name="Moy M."/>
            <person name="Murphy B."/>
            <person name="Murphy L."/>
            <person name="Muzny D.M."/>
            <person name="Nelson D.L."/>
            <person name="Nelson D.R."/>
            <person name="Nelson K.A."/>
            <person name="Nixon K."/>
            <person name="Nusskern D.R."/>
            <person name="Pacleb J.M."/>
            <person name="Palazzolo M."/>
            <person name="Pittman G.S."/>
            <person name="Pan S."/>
            <person name="Pollard J."/>
            <person name="Puri V."/>
            <person name="Reese M.G."/>
            <person name="Reinert K."/>
            <person name="Remington K."/>
            <person name="Saunders R.D.C."/>
            <person name="Scheeler F."/>
            <person name="Shen H."/>
            <person name="Shue B.C."/>
            <person name="Siden-Kiamos I."/>
            <person name="Simpson M."/>
            <person name="Skupski M.P."/>
            <person name="Smith T.J."/>
            <person name="Spier E."/>
            <person name="Spradling A.C."/>
            <person name="Stapleton M."/>
            <person name="Strong R."/>
            <person name="Sun E."/>
            <person name="Svirskas R."/>
            <person name="Tector C."/>
            <person name="Turner R."/>
            <person name="Venter E."/>
            <person name="Wang A.H."/>
            <person name="Wang X."/>
            <person name="Wang Z.-Y."/>
            <person name="Wassarman D.A."/>
            <person name="Weinstock G.M."/>
            <person name="Weissenbach J."/>
            <person name="Williams S.M."/>
            <person name="Woodage T."/>
            <person name="Worley K.C."/>
            <person name="Wu D."/>
            <person name="Yang S."/>
            <person name="Yao Q.A."/>
            <person name="Ye J."/>
            <person name="Yeh R.-F."/>
            <person name="Zaveri J.S."/>
            <person name="Zhan M."/>
            <person name="Zhang G."/>
            <person name="Zhao Q."/>
            <person name="Zheng L."/>
            <person name="Zheng X.H."/>
            <person name="Zhong F.N."/>
            <person name="Zhong W."/>
            <person name="Zhou X."/>
            <person name="Zhu S.C."/>
            <person name="Zhu X."/>
            <person name="Smith H.O."/>
            <person name="Gibbs R.A."/>
            <person name="Myers E.W."/>
            <person name="Rubin G.M."/>
            <person name="Venter J.C."/>
        </authorList>
    </citation>
    <scope>NUCLEOTIDE SEQUENCE [LARGE SCALE GENOMIC DNA]</scope>
    <source>
        <strain>Berkeley</strain>
    </source>
</reference>
<reference key="3">
    <citation type="journal article" date="2002" name="Genome Biol.">
        <title>Annotation of the Drosophila melanogaster euchromatic genome: a systematic review.</title>
        <authorList>
            <person name="Misra S."/>
            <person name="Crosby M.A."/>
            <person name="Mungall C.J."/>
            <person name="Matthews B.B."/>
            <person name="Campbell K.S."/>
            <person name="Hradecky P."/>
            <person name="Huang Y."/>
            <person name="Kaminker J.S."/>
            <person name="Millburn G.H."/>
            <person name="Prochnik S.E."/>
            <person name="Smith C.D."/>
            <person name="Tupy J.L."/>
            <person name="Whitfield E.J."/>
            <person name="Bayraktaroglu L."/>
            <person name="Berman B.P."/>
            <person name="Bettencourt B.R."/>
            <person name="Celniker S.E."/>
            <person name="de Grey A.D.N.J."/>
            <person name="Drysdale R.A."/>
            <person name="Harris N.L."/>
            <person name="Richter J."/>
            <person name="Russo S."/>
            <person name="Schroeder A.J."/>
            <person name="Shu S.Q."/>
            <person name="Stapleton M."/>
            <person name="Yamada C."/>
            <person name="Ashburner M."/>
            <person name="Gelbart W.M."/>
            <person name="Rubin G.M."/>
            <person name="Lewis S.E."/>
        </authorList>
    </citation>
    <scope>GENOME REANNOTATION</scope>
    <source>
        <strain>Berkeley</strain>
    </source>
</reference>
<reference key="4">
    <citation type="journal article" date="2002" name="Genome Biol.">
        <title>A Drosophila full-length cDNA resource.</title>
        <authorList>
            <person name="Stapleton M."/>
            <person name="Carlson J.W."/>
            <person name="Brokstein P."/>
            <person name="Yu C."/>
            <person name="Champe M."/>
            <person name="George R.A."/>
            <person name="Guarin H."/>
            <person name="Kronmiller B."/>
            <person name="Pacleb J.M."/>
            <person name="Park S."/>
            <person name="Wan K.H."/>
            <person name="Rubin G.M."/>
            <person name="Celniker S.E."/>
        </authorList>
    </citation>
    <scope>NUCLEOTIDE SEQUENCE [LARGE SCALE MRNA]</scope>
    <source>
        <strain>Berkeley</strain>
        <tissue>Embryo</tissue>
    </source>
</reference>
<reference key="5">
    <citation type="journal article" date="1990" name="Cell">
        <title>Identification and characterization of a gene encoding a kinesin-like protein in Drosophila.</title>
        <authorList>
            <person name="McDonald H.B."/>
            <person name="Goldstein L.S.B."/>
        </authorList>
    </citation>
    <scope>NUCLEOTIDE SEQUENCE [MRNA] OF 16-700</scope>
</reference>
<reference key="6">
    <citation type="journal article" date="1990" name="Nature">
        <title>The Drosophila claret segregation protein is a minus-end directed motor molecule.</title>
        <authorList>
            <person name="Walker R.A."/>
            <person name="Salmon E.D."/>
            <person name="Endow S.A."/>
        </authorList>
    </citation>
    <scope>FUNCTION</scope>
</reference>
<reference key="7">
    <citation type="journal article" date="1994" name="EMBO J.">
        <title>Origins of reversed directionality in the ncd molecular motor.</title>
        <authorList>
            <person name="Lockhart A."/>
            <person name="Cross R.A."/>
        </authorList>
    </citation>
    <scope>FUNCTION</scope>
</reference>
<reference key="8">
    <citation type="journal article" date="1991" name="EMBO J.">
        <title>Separation of meiotic and mitotic effects of claret non-disjunctional on chromosome segregation in Drosophila.</title>
        <authorList>
            <person name="Komma D.J."/>
            <person name="Horne A.S."/>
            <person name="Endow S.A."/>
        </authorList>
    </citation>
    <scope>MUTAGENESIS OF VAL-556</scope>
</reference>
<reference key="9">
    <citation type="journal article" date="1996" name="EMBO J.">
        <title>A point mutation in the microtubule binding region of the Ncd motor protein reduces motor velocity.</title>
        <authorList>
            <person name="Moore J.D."/>
            <person name="Song H."/>
            <person name="Endow S.A."/>
        </authorList>
    </citation>
    <scope>MUTAGENESIS OF VAL-556</scope>
</reference>
<reference key="10">
    <citation type="journal article" date="2008" name="J. Proteome Res.">
        <title>Phosphoproteome analysis of Drosophila melanogaster embryos.</title>
        <authorList>
            <person name="Zhai B."/>
            <person name="Villen J."/>
            <person name="Beausoleil S.A."/>
            <person name="Mintseris J."/>
            <person name="Gygi S.P."/>
        </authorList>
    </citation>
    <scope>PHOSPHORYLATION [LARGE SCALE ANALYSIS] AT SER-94 AND SER-96</scope>
    <scope>IDENTIFICATION BY MASS SPECTROMETRY</scope>
    <source>
        <tissue>Embryo</tissue>
    </source>
</reference>
<reference key="11">
    <citation type="journal article" date="1996" name="Nature">
        <title>Crystal structure of the motor domain of the kinesin-related motor ncd.</title>
        <authorList>
            <person name="Sablin E.P."/>
            <person name="Kull F.J."/>
            <person name="Cooke R."/>
            <person name="Vale R.D."/>
            <person name="Fletterick R.J."/>
        </authorList>
    </citation>
    <scope>X-RAY CRYSTALLOGRAPHY (2.5 ANGSTROMS) OF 335-700</scope>
</reference>
<reference evidence="13 14 15 16 17" key="12">
    <citation type="journal article" date="2016" name="Structure">
        <title>Structural Basis of Backwards Motion in Kinesin-1-Kinesin-14 Chimera: Implication for Kinesin-14 Motility.</title>
        <authorList>
            <person name="Yamagishi M."/>
            <person name="Shigematsu H."/>
            <person name="Yokoyama T."/>
            <person name="Kikkawa M."/>
            <person name="Sugawa M."/>
            <person name="Aoki M."/>
            <person name="Shirouzu M."/>
            <person name="Yajima J."/>
            <person name="Nitta R."/>
        </authorList>
    </citation>
    <scope>STRUCTURE BY ELECTRON MICROSCOPY (2.90 ANGSTROMS) OF 325-348 AND 664-700 OF CHIMERIC CONSTRUCT WITH RAT KIF5C IN COMPLEX WITH ADP AND TUBULIN</scope>
    <scope>FUNCTION</scope>
    <scope>CATALYTIC ACTIVITY</scope>
    <scope>BIOPHYSICOCHEMICAL PROPERTIES</scope>
</reference>
<organism>
    <name type="scientific">Drosophila melanogaster</name>
    <name type="common">Fruit fly</name>
    <dbReference type="NCBI Taxonomy" id="7227"/>
    <lineage>
        <taxon>Eukaryota</taxon>
        <taxon>Metazoa</taxon>
        <taxon>Ecdysozoa</taxon>
        <taxon>Arthropoda</taxon>
        <taxon>Hexapoda</taxon>
        <taxon>Insecta</taxon>
        <taxon>Pterygota</taxon>
        <taxon>Neoptera</taxon>
        <taxon>Endopterygota</taxon>
        <taxon>Diptera</taxon>
        <taxon>Brachycera</taxon>
        <taxon>Muscomorpha</taxon>
        <taxon>Ephydroidea</taxon>
        <taxon>Drosophilidae</taxon>
        <taxon>Drosophila</taxon>
        <taxon>Sophophora</taxon>
    </lineage>
</organism>
<dbReference type="EC" id="3.6.4.-" evidence="8"/>
<dbReference type="EMBL" id="X52814">
    <property type="protein sequence ID" value="CAA36998.1"/>
    <property type="molecule type" value="Genomic_DNA"/>
</dbReference>
<dbReference type="EMBL" id="M33932">
    <property type="protein sequence ID" value="AAA28716.1"/>
    <property type="molecule type" value="mRNA"/>
</dbReference>
<dbReference type="EMBL" id="AE014297">
    <property type="protein sequence ID" value="AAF56942.1"/>
    <property type="molecule type" value="Genomic_DNA"/>
</dbReference>
<dbReference type="EMBL" id="AY058596">
    <property type="protein sequence ID" value="AAL13825.1"/>
    <property type="molecule type" value="mRNA"/>
</dbReference>
<dbReference type="EMBL" id="X57475">
    <property type="protein sequence ID" value="CAA40713.1"/>
    <property type="molecule type" value="Genomic_DNA"/>
</dbReference>
<dbReference type="PIR" id="S09748">
    <property type="entry name" value="S09748"/>
</dbReference>
<dbReference type="RefSeq" id="NP_001287592.1">
    <property type="nucleotide sequence ID" value="NM_001300663.1"/>
</dbReference>
<dbReference type="RefSeq" id="NP_476651.1">
    <property type="nucleotide sequence ID" value="NM_057303.5"/>
</dbReference>
<dbReference type="PDB" id="1CZ7">
    <property type="method" value="X-ray"/>
    <property type="resolution" value="2.90 A"/>
    <property type="chains" value="A/B/C/D=295-700"/>
</dbReference>
<dbReference type="PDB" id="1N6M">
    <property type="method" value="X-ray"/>
    <property type="resolution" value="2.50 A"/>
    <property type="chains" value="A/B=293-700"/>
</dbReference>
<dbReference type="PDB" id="2NCD">
    <property type="method" value="X-ray"/>
    <property type="resolution" value="2.50 A"/>
    <property type="chains" value="A=281-700"/>
</dbReference>
<dbReference type="PDB" id="3L1C">
    <property type="method" value="X-ray"/>
    <property type="resolution" value="2.75 A"/>
    <property type="chains" value="A/B=293-674"/>
</dbReference>
<dbReference type="PDB" id="3U06">
    <property type="method" value="X-ray"/>
    <property type="resolution" value="2.35 A"/>
    <property type="chains" value="A/B=293-700"/>
</dbReference>
<dbReference type="PDB" id="5HLE">
    <property type="method" value="X-ray"/>
    <property type="resolution" value="2.90 A"/>
    <property type="chains" value="A=325-348, A=664-700"/>
</dbReference>
<dbReference type="PDB" id="5HNW">
    <property type="method" value="EM"/>
    <property type="resolution" value="6.60 A"/>
    <property type="chains" value="K=325-348, K=664-700"/>
</dbReference>
<dbReference type="PDB" id="5HNX">
    <property type="method" value="EM"/>
    <property type="resolution" value="6.60 A"/>
    <property type="chains" value="K=325-348, K=664-700"/>
</dbReference>
<dbReference type="PDB" id="5HNY">
    <property type="method" value="EM"/>
    <property type="resolution" value="6.30 A"/>
    <property type="chains" value="K=325-348, K=447-493, K=695-700"/>
</dbReference>
<dbReference type="PDB" id="5HNZ">
    <property type="method" value="EM"/>
    <property type="resolution" value="5.80 A"/>
    <property type="chains" value="K=325-348, K=430-700"/>
</dbReference>
<dbReference type="PDB" id="5W3D">
    <property type="method" value="X-ray"/>
    <property type="resolution" value="2.79 A"/>
    <property type="chains" value="A/B=293-700"/>
</dbReference>
<dbReference type="PDBsum" id="1CZ7"/>
<dbReference type="PDBsum" id="1N6M"/>
<dbReference type="PDBsum" id="2NCD"/>
<dbReference type="PDBsum" id="3L1C"/>
<dbReference type="PDBsum" id="3U06"/>
<dbReference type="PDBsum" id="5HLE"/>
<dbReference type="PDBsum" id="5HNW"/>
<dbReference type="PDBsum" id="5HNX"/>
<dbReference type="PDBsum" id="5HNY"/>
<dbReference type="PDBsum" id="5HNZ"/>
<dbReference type="PDBsum" id="5W3D"/>
<dbReference type="EMDB" id="EMD-8059"/>
<dbReference type="EMDB" id="EMD-8060"/>
<dbReference type="EMDB" id="EMD-8061"/>
<dbReference type="SMR" id="P20480"/>
<dbReference type="BioGRID" id="68381">
    <property type="interactions" value="33"/>
</dbReference>
<dbReference type="DIP" id="DIP-21302N"/>
<dbReference type="FunCoup" id="P20480">
    <property type="interactions" value="789"/>
</dbReference>
<dbReference type="IntAct" id="P20480">
    <property type="interactions" value="9"/>
</dbReference>
<dbReference type="MINT" id="P20480"/>
<dbReference type="STRING" id="7227.FBpp0311231"/>
<dbReference type="iPTMnet" id="P20480"/>
<dbReference type="PaxDb" id="7227-FBpp0084900"/>
<dbReference type="DNASU" id="43517"/>
<dbReference type="EnsemblMetazoa" id="FBtr0085534">
    <property type="protein sequence ID" value="FBpp0084900"/>
    <property type="gene ID" value="FBgn0002924"/>
</dbReference>
<dbReference type="EnsemblMetazoa" id="FBtr0344976">
    <property type="protein sequence ID" value="FBpp0311231"/>
    <property type="gene ID" value="FBgn0002924"/>
</dbReference>
<dbReference type="GeneID" id="43517"/>
<dbReference type="KEGG" id="dme:Dmel_CG7831"/>
<dbReference type="AGR" id="FB:FBgn0002924"/>
<dbReference type="CTD" id="43517"/>
<dbReference type="FlyBase" id="FBgn0002924">
    <property type="gene designation" value="ncd"/>
</dbReference>
<dbReference type="VEuPathDB" id="VectorBase:FBgn0002924"/>
<dbReference type="eggNOG" id="KOG0239">
    <property type="taxonomic scope" value="Eukaryota"/>
</dbReference>
<dbReference type="GeneTree" id="ENSGT00940000156463"/>
<dbReference type="HOGENOM" id="CLU_001485_12_4_1"/>
<dbReference type="InParanoid" id="P20480"/>
<dbReference type="OMA" id="WTYHDEA"/>
<dbReference type="OrthoDB" id="3176171at2759"/>
<dbReference type="PhylomeDB" id="P20480"/>
<dbReference type="SignaLink" id="P20480"/>
<dbReference type="BioGRID-ORCS" id="43517">
    <property type="hits" value="0 hits in 3 CRISPR screens"/>
</dbReference>
<dbReference type="CD-CODE" id="2838EF58">
    <property type="entry name" value="Centrosome"/>
</dbReference>
<dbReference type="EvolutionaryTrace" id="P20480"/>
<dbReference type="GenomeRNAi" id="43517"/>
<dbReference type="PRO" id="PR:P20480"/>
<dbReference type="Proteomes" id="UP000000803">
    <property type="component" value="Chromosome 3R"/>
</dbReference>
<dbReference type="Bgee" id="FBgn0002924">
    <property type="expression patterns" value="Expressed in cleaving embryo and 51 other cell types or tissues"/>
</dbReference>
<dbReference type="ExpressionAtlas" id="P20480">
    <property type="expression patterns" value="baseline and differential"/>
</dbReference>
<dbReference type="GO" id="GO:0005813">
    <property type="term" value="C:centrosome"/>
    <property type="evidence" value="ECO:0000314"/>
    <property type="project" value="FlyBase"/>
</dbReference>
<dbReference type="GO" id="GO:0005829">
    <property type="term" value="C:cytosol"/>
    <property type="evidence" value="ECO:0000304"/>
    <property type="project" value="Reactome"/>
</dbReference>
<dbReference type="GO" id="GO:0072687">
    <property type="term" value="C:meiotic spindle"/>
    <property type="evidence" value="ECO:0000314"/>
    <property type="project" value="FlyBase"/>
</dbReference>
<dbReference type="GO" id="GO:1990498">
    <property type="term" value="C:mitotic spindle microtubule"/>
    <property type="evidence" value="ECO:0000314"/>
    <property type="project" value="FlyBase"/>
</dbReference>
<dbReference type="GO" id="GO:0005634">
    <property type="term" value="C:nucleus"/>
    <property type="evidence" value="ECO:0000314"/>
    <property type="project" value="FlyBase"/>
</dbReference>
<dbReference type="GO" id="GO:0005819">
    <property type="term" value="C:spindle"/>
    <property type="evidence" value="ECO:0000314"/>
    <property type="project" value="FlyBase"/>
</dbReference>
<dbReference type="GO" id="GO:0005524">
    <property type="term" value="F:ATP binding"/>
    <property type="evidence" value="ECO:0007669"/>
    <property type="project" value="UniProtKB-KW"/>
</dbReference>
<dbReference type="GO" id="GO:0016787">
    <property type="term" value="F:hydrolase activity"/>
    <property type="evidence" value="ECO:0007669"/>
    <property type="project" value="UniProtKB-KW"/>
</dbReference>
<dbReference type="GO" id="GO:0008017">
    <property type="term" value="F:microtubule binding"/>
    <property type="evidence" value="ECO:0007669"/>
    <property type="project" value="InterPro"/>
</dbReference>
<dbReference type="GO" id="GO:0008569">
    <property type="term" value="F:minus-end-directed microtubule motor activity"/>
    <property type="evidence" value="ECO:0000303"/>
    <property type="project" value="FlyBase"/>
</dbReference>
<dbReference type="GO" id="GO:0042803">
    <property type="term" value="F:protein homodimerization activity"/>
    <property type="evidence" value="ECO:0000314"/>
    <property type="project" value="FlyBase"/>
</dbReference>
<dbReference type="GO" id="GO:0051301">
    <property type="term" value="P:cell division"/>
    <property type="evidence" value="ECO:0007669"/>
    <property type="project" value="UniProtKB-KW"/>
</dbReference>
<dbReference type="GO" id="GO:0007059">
    <property type="term" value="P:chromosome segregation"/>
    <property type="evidence" value="ECO:0000315"/>
    <property type="project" value="FlyBase"/>
</dbReference>
<dbReference type="GO" id="GO:0032837">
    <property type="term" value="P:distributive segregation"/>
    <property type="evidence" value="ECO:0000315"/>
    <property type="project" value="FlyBase"/>
</dbReference>
<dbReference type="GO" id="GO:0090306">
    <property type="term" value="P:meiotic spindle assembly"/>
    <property type="evidence" value="ECO:0000315"/>
    <property type="project" value="FlyBase"/>
</dbReference>
<dbReference type="GO" id="GO:0000212">
    <property type="term" value="P:meiotic spindle organization"/>
    <property type="evidence" value="ECO:0000315"/>
    <property type="project" value="FlyBase"/>
</dbReference>
<dbReference type="GO" id="GO:0001578">
    <property type="term" value="P:microtubule bundle formation"/>
    <property type="evidence" value="ECO:0000314"/>
    <property type="project" value="FlyBase"/>
</dbReference>
<dbReference type="GO" id="GO:0031534">
    <property type="term" value="P:minus-end directed microtubule sliding"/>
    <property type="evidence" value="ECO:0000314"/>
    <property type="project" value="FlyBase"/>
</dbReference>
<dbReference type="GO" id="GO:0007100">
    <property type="term" value="P:mitotic centrosome separation"/>
    <property type="evidence" value="ECO:0000315"/>
    <property type="project" value="FlyBase"/>
</dbReference>
<dbReference type="GO" id="GO:0090307">
    <property type="term" value="P:mitotic spindle assembly"/>
    <property type="evidence" value="ECO:0000315"/>
    <property type="project" value="FlyBase"/>
</dbReference>
<dbReference type="GO" id="GO:0000022">
    <property type="term" value="P:mitotic spindle elongation"/>
    <property type="evidence" value="ECO:0000315"/>
    <property type="project" value="FlyBase"/>
</dbReference>
<dbReference type="GO" id="GO:0007052">
    <property type="term" value="P:mitotic spindle organization"/>
    <property type="evidence" value="ECO:0000315"/>
    <property type="project" value="FlyBase"/>
</dbReference>
<dbReference type="GO" id="GO:0051028">
    <property type="term" value="P:mRNA transport"/>
    <property type="evidence" value="ECO:0000315"/>
    <property type="project" value="FlyBase"/>
</dbReference>
<dbReference type="GO" id="GO:1901673">
    <property type="term" value="P:regulation of mitotic spindle assembly"/>
    <property type="evidence" value="ECO:0000316"/>
    <property type="project" value="FlyBase"/>
</dbReference>
<dbReference type="GO" id="GO:0032888">
    <property type="term" value="P:regulation of mitotic spindle elongation"/>
    <property type="evidence" value="ECO:0000315"/>
    <property type="project" value="FlyBase"/>
</dbReference>
<dbReference type="GO" id="GO:0007056">
    <property type="term" value="P:spindle assembly involved in female meiosis"/>
    <property type="evidence" value="ECO:0000303"/>
    <property type="project" value="FlyBase"/>
</dbReference>
<dbReference type="GO" id="GO:0007051">
    <property type="term" value="P:spindle organization"/>
    <property type="evidence" value="ECO:0000315"/>
    <property type="project" value="FlyBase"/>
</dbReference>
<dbReference type="CDD" id="cd01366">
    <property type="entry name" value="KISc_C_terminal"/>
    <property type="match status" value="1"/>
</dbReference>
<dbReference type="FunFam" id="3.40.850.10:FF:000065">
    <property type="entry name" value="Kinesin-like protein"/>
    <property type="match status" value="1"/>
</dbReference>
<dbReference type="Gene3D" id="3.40.850.10">
    <property type="entry name" value="Kinesin motor domain"/>
    <property type="match status" value="1"/>
</dbReference>
<dbReference type="InterPro" id="IPR027640">
    <property type="entry name" value="Kinesin-like_fam"/>
</dbReference>
<dbReference type="InterPro" id="IPR019821">
    <property type="entry name" value="Kinesin_motor_CS"/>
</dbReference>
<dbReference type="InterPro" id="IPR001752">
    <property type="entry name" value="Kinesin_motor_dom"/>
</dbReference>
<dbReference type="InterPro" id="IPR036961">
    <property type="entry name" value="Kinesin_motor_dom_sf"/>
</dbReference>
<dbReference type="InterPro" id="IPR027417">
    <property type="entry name" value="P-loop_NTPase"/>
</dbReference>
<dbReference type="PANTHER" id="PTHR47972">
    <property type="entry name" value="KINESIN-LIKE PROTEIN KLP-3"/>
    <property type="match status" value="1"/>
</dbReference>
<dbReference type="PANTHER" id="PTHR47972:SF45">
    <property type="entry name" value="PROTEIN CLARET SEGREGATIONAL"/>
    <property type="match status" value="1"/>
</dbReference>
<dbReference type="Pfam" id="PF00225">
    <property type="entry name" value="Kinesin"/>
    <property type="match status" value="1"/>
</dbReference>
<dbReference type="PRINTS" id="PR00380">
    <property type="entry name" value="KINESINHEAVY"/>
</dbReference>
<dbReference type="SMART" id="SM00129">
    <property type="entry name" value="KISc"/>
    <property type="match status" value="1"/>
</dbReference>
<dbReference type="SUPFAM" id="SSF52540">
    <property type="entry name" value="P-loop containing nucleoside triphosphate hydrolases"/>
    <property type="match status" value="1"/>
</dbReference>
<dbReference type="PROSITE" id="PS00411">
    <property type="entry name" value="KINESIN_MOTOR_1"/>
    <property type="match status" value="1"/>
</dbReference>
<dbReference type="PROSITE" id="PS50067">
    <property type="entry name" value="KINESIN_MOTOR_2"/>
    <property type="match status" value="1"/>
</dbReference>